<sequence>MTDYDFEHLDTSALPVRQRRILEVIRDWVVEHGYAPSTRQIGAAVGLRSMSSVARHLRSLEERGFLRRGEGVARPIDVRLFLHGTAAAAPSEDAVTVPVVGDIAAGAPILAEEHTDDLLTLPRELVGRGTVFALRVRGDSMIDAAICDGDTVVVRSQREANSGDIVAAMIGEEATVKVFRRRNGHVLLEPRNPAYDVIDGDEAVILGKVVSVLRRI</sequence>
<protein>
    <recommendedName>
        <fullName evidence="1">LexA repressor 1</fullName>
        <ecNumber evidence="1">3.4.21.88</ecNumber>
    </recommendedName>
</protein>
<evidence type="ECO:0000255" key="1">
    <source>
        <dbReference type="HAMAP-Rule" id="MF_00015"/>
    </source>
</evidence>
<keyword id="KW-0068">Autocatalytic cleavage</keyword>
<keyword id="KW-0227">DNA damage</keyword>
<keyword id="KW-0234">DNA repair</keyword>
<keyword id="KW-0235">DNA replication</keyword>
<keyword id="KW-0238">DNA-binding</keyword>
<keyword id="KW-0378">Hydrolase</keyword>
<keyword id="KW-1185">Reference proteome</keyword>
<keyword id="KW-0678">Repressor</keyword>
<keyword id="KW-0742">SOS response</keyword>
<keyword id="KW-0804">Transcription</keyword>
<keyword id="KW-0805">Transcription regulation</keyword>
<dbReference type="EC" id="3.4.21.88" evidence="1"/>
<dbReference type="EMBL" id="AP006618">
    <property type="protein sequence ID" value="BAD60070.1"/>
    <property type="molecule type" value="Genomic_DNA"/>
</dbReference>
<dbReference type="SMR" id="Q5YP21"/>
<dbReference type="STRING" id="247156.NFA_52180"/>
<dbReference type="MEROPS" id="S24.001"/>
<dbReference type="GeneID" id="61135794"/>
<dbReference type="KEGG" id="nfa:NFA_52180"/>
<dbReference type="eggNOG" id="COG1974">
    <property type="taxonomic scope" value="Bacteria"/>
</dbReference>
<dbReference type="HOGENOM" id="CLU_066192_45_0_11"/>
<dbReference type="OrthoDB" id="9802364at2"/>
<dbReference type="Proteomes" id="UP000006820">
    <property type="component" value="Chromosome"/>
</dbReference>
<dbReference type="GO" id="GO:0003677">
    <property type="term" value="F:DNA binding"/>
    <property type="evidence" value="ECO:0007669"/>
    <property type="project" value="UniProtKB-UniRule"/>
</dbReference>
<dbReference type="GO" id="GO:0004252">
    <property type="term" value="F:serine-type endopeptidase activity"/>
    <property type="evidence" value="ECO:0007669"/>
    <property type="project" value="UniProtKB-UniRule"/>
</dbReference>
<dbReference type="GO" id="GO:0006281">
    <property type="term" value="P:DNA repair"/>
    <property type="evidence" value="ECO:0007669"/>
    <property type="project" value="UniProtKB-UniRule"/>
</dbReference>
<dbReference type="GO" id="GO:0006260">
    <property type="term" value="P:DNA replication"/>
    <property type="evidence" value="ECO:0007669"/>
    <property type="project" value="UniProtKB-UniRule"/>
</dbReference>
<dbReference type="GO" id="GO:0045892">
    <property type="term" value="P:negative regulation of DNA-templated transcription"/>
    <property type="evidence" value="ECO:0007669"/>
    <property type="project" value="UniProtKB-UniRule"/>
</dbReference>
<dbReference type="GO" id="GO:0006508">
    <property type="term" value="P:proteolysis"/>
    <property type="evidence" value="ECO:0007669"/>
    <property type="project" value="InterPro"/>
</dbReference>
<dbReference type="GO" id="GO:0009432">
    <property type="term" value="P:SOS response"/>
    <property type="evidence" value="ECO:0007669"/>
    <property type="project" value="UniProtKB-UniRule"/>
</dbReference>
<dbReference type="CDD" id="cd06529">
    <property type="entry name" value="S24_LexA-like"/>
    <property type="match status" value="1"/>
</dbReference>
<dbReference type="FunFam" id="2.10.109.10:FF:000001">
    <property type="entry name" value="LexA repressor"/>
    <property type="match status" value="1"/>
</dbReference>
<dbReference type="Gene3D" id="2.10.109.10">
    <property type="entry name" value="Umud Fragment, subunit A"/>
    <property type="match status" value="1"/>
</dbReference>
<dbReference type="Gene3D" id="1.10.10.10">
    <property type="entry name" value="Winged helix-like DNA-binding domain superfamily/Winged helix DNA-binding domain"/>
    <property type="match status" value="1"/>
</dbReference>
<dbReference type="HAMAP" id="MF_00015">
    <property type="entry name" value="LexA"/>
    <property type="match status" value="1"/>
</dbReference>
<dbReference type="InterPro" id="IPR006200">
    <property type="entry name" value="LexA"/>
</dbReference>
<dbReference type="InterPro" id="IPR039418">
    <property type="entry name" value="LexA-like"/>
</dbReference>
<dbReference type="InterPro" id="IPR036286">
    <property type="entry name" value="LexA/Signal_pep-like_sf"/>
</dbReference>
<dbReference type="InterPro" id="IPR006199">
    <property type="entry name" value="LexA_DNA-bd_dom"/>
</dbReference>
<dbReference type="InterPro" id="IPR050077">
    <property type="entry name" value="LexA_repressor"/>
</dbReference>
<dbReference type="InterPro" id="IPR006197">
    <property type="entry name" value="Peptidase_S24_LexA"/>
</dbReference>
<dbReference type="InterPro" id="IPR015927">
    <property type="entry name" value="Peptidase_S24_S26A/B/C"/>
</dbReference>
<dbReference type="InterPro" id="IPR036388">
    <property type="entry name" value="WH-like_DNA-bd_sf"/>
</dbReference>
<dbReference type="InterPro" id="IPR036390">
    <property type="entry name" value="WH_DNA-bd_sf"/>
</dbReference>
<dbReference type="NCBIfam" id="TIGR00498">
    <property type="entry name" value="lexA"/>
    <property type="match status" value="1"/>
</dbReference>
<dbReference type="PANTHER" id="PTHR33516">
    <property type="entry name" value="LEXA REPRESSOR"/>
    <property type="match status" value="1"/>
</dbReference>
<dbReference type="PANTHER" id="PTHR33516:SF2">
    <property type="entry name" value="LEXA REPRESSOR-RELATED"/>
    <property type="match status" value="1"/>
</dbReference>
<dbReference type="Pfam" id="PF01726">
    <property type="entry name" value="LexA_DNA_bind"/>
    <property type="match status" value="1"/>
</dbReference>
<dbReference type="Pfam" id="PF00717">
    <property type="entry name" value="Peptidase_S24"/>
    <property type="match status" value="1"/>
</dbReference>
<dbReference type="PRINTS" id="PR00726">
    <property type="entry name" value="LEXASERPTASE"/>
</dbReference>
<dbReference type="SUPFAM" id="SSF51306">
    <property type="entry name" value="LexA/Signal peptidase"/>
    <property type="match status" value="1"/>
</dbReference>
<dbReference type="SUPFAM" id="SSF46785">
    <property type="entry name" value="Winged helix' DNA-binding domain"/>
    <property type="match status" value="1"/>
</dbReference>
<reference key="1">
    <citation type="journal article" date="2004" name="Proc. Natl. Acad. Sci. U.S.A.">
        <title>The complete genomic sequence of Nocardia farcinica IFM 10152.</title>
        <authorList>
            <person name="Ishikawa J."/>
            <person name="Yamashita A."/>
            <person name="Mikami Y."/>
            <person name="Hoshino Y."/>
            <person name="Kurita H."/>
            <person name="Hotta K."/>
            <person name="Shiba T."/>
            <person name="Hattori M."/>
        </authorList>
    </citation>
    <scope>NUCLEOTIDE SEQUENCE [LARGE SCALE GENOMIC DNA]</scope>
    <source>
        <strain>IFM 10152</strain>
    </source>
</reference>
<name>LEXA1_NOCFA</name>
<proteinExistence type="inferred from homology"/>
<gene>
    <name evidence="1" type="primary">lexA1</name>
    <name type="ordered locus">NFA_52180</name>
</gene>
<comment type="function">
    <text evidence="1">Represses a number of genes involved in the response to DNA damage (SOS response), including recA and lexA. In the presence of single-stranded DNA, RecA interacts with LexA causing an autocatalytic cleavage which disrupts the DNA-binding part of LexA, leading to derepression of the SOS regulon and eventually DNA repair.</text>
</comment>
<comment type="catalytic activity">
    <reaction evidence="1">
        <text>Hydrolysis of Ala-|-Gly bond in repressor LexA.</text>
        <dbReference type="EC" id="3.4.21.88"/>
    </reaction>
</comment>
<comment type="subunit">
    <text evidence="1">Homodimer.</text>
</comment>
<comment type="similarity">
    <text evidence="1">Belongs to the peptidase S24 family.</text>
</comment>
<organism>
    <name type="scientific">Nocardia farcinica (strain IFM 10152)</name>
    <dbReference type="NCBI Taxonomy" id="247156"/>
    <lineage>
        <taxon>Bacteria</taxon>
        <taxon>Bacillati</taxon>
        <taxon>Actinomycetota</taxon>
        <taxon>Actinomycetes</taxon>
        <taxon>Mycobacteriales</taxon>
        <taxon>Nocardiaceae</taxon>
        <taxon>Nocardia</taxon>
    </lineage>
</organism>
<accession>Q5YP21</accession>
<feature type="chain" id="PRO_0000170060" description="LexA repressor 1">
    <location>
        <begin position="1"/>
        <end position="216"/>
    </location>
</feature>
<feature type="DNA-binding region" description="H-T-H motif" evidence="1">
    <location>
        <begin position="38"/>
        <end position="58"/>
    </location>
</feature>
<feature type="active site" description="For autocatalytic cleavage activity" evidence="1">
    <location>
        <position position="140"/>
    </location>
</feature>
<feature type="active site" description="For autocatalytic cleavage activity" evidence="1">
    <location>
        <position position="177"/>
    </location>
</feature>
<feature type="site" description="Cleavage; by autolysis" evidence="1">
    <location>
        <begin position="105"/>
        <end position="106"/>
    </location>
</feature>